<sequence length="345" mass="38459">MNSELFSPYTIKDVTLKNRIVMSPMCMYSSENEDGQVTNFHLIHYGTRAAGQVGLVMIEATAVLPEGRISNKDLGIWDDSLIEGLHKTTTFIHDNGAKAAIQLAHAGRKAELETDALAPSAVPFNETMKIPVEMSIHQIKNTILAFQQAAIRSKQAGFDVIEIHGAHGYLINEFLSPLSNKRTDEYGGSPENRYRFLREIIDSINEVWNGPLFVRISANDYHPDGLTVQDYVQYTKWMKEQGVDLIDCSSGAVVPARIDVYPGYQVQYAKHIKEHANIATGAVGLITTGAQAEQILNNNEADLIFIGRELLRNPYFPRIAANELGFELEEPHQYERAPGKISTNK</sequence>
<gene>
    <name evidence="1" type="primary">namA</name>
    <name type="ordered locus">BA_2038</name>
    <name type="ordered locus">GBAA_2038</name>
    <name type="ordered locus">BAS1891</name>
</gene>
<protein>
    <recommendedName>
        <fullName evidence="1">NADPH dehydrogenase</fullName>
        <ecNumber evidence="1">1.6.99.1</ecNumber>
    </recommendedName>
</protein>
<organism>
    <name type="scientific">Bacillus anthracis</name>
    <dbReference type="NCBI Taxonomy" id="1392"/>
    <lineage>
        <taxon>Bacteria</taxon>
        <taxon>Bacillati</taxon>
        <taxon>Bacillota</taxon>
        <taxon>Bacilli</taxon>
        <taxon>Bacillales</taxon>
        <taxon>Bacillaceae</taxon>
        <taxon>Bacillus</taxon>
        <taxon>Bacillus cereus group</taxon>
    </lineage>
</organism>
<proteinExistence type="inferred from homology"/>
<feature type="chain" id="PRO_0000216112" description="NADPH dehydrogenase">
    <location>
        <begin position="1"/>
        <end position="345"/>
    </location>
</feature>
<feature type="binding site" evidence="1">
    <location>
        <begin position="23"/>
        <end position="26"/>
    </location>
    <ligand>
        <name>FMN</name>
        <dbReference type="ChEBI" id="CHEBI:58210"/>
    </ligand>
</feature>
<feature type="binding site" evidence="1">
    <location>
        <position position="28"/>
    </location>
    <ligand>
        <name>substrate</name>
    </ligand>
</feature>
<feature type="binding site" evidence="1">
    <location>
        <position position="60"/>
    </location>
    <ligand>
        <name>FMN</name>
        <dbReference type="ChEBI" id="CHEBI:58210"/>
    </ligand>
</feature>
<feature type="binding site" evidence="1">
    <location>
        <position position="102"/>
    </location>
    <ligand>
        <name>FMN</name>
        <dbReference type="ChEBI" id="CHEBI:58210"/>
    </ligand>
</feature>
<feature type="binding site" evidence="1">
    <location>
        <begin position="164"/>
        <end position="167"/>
    </location>
    <ligand>
        <name>substrate</name>
    </ligand>
</feature>
<feature type="binding site" evidence="1">
    <location>
        <position position="215"/>
    </location>
    <ligand>
        <name>FMN</name>
        <dbReference type="ChEBI" id="CHEBI:58210"/>
    </ligand>
</feature>
<feature type="binding site" evidence="1">
    <location>
        <begin position="307"/>
        <end position="308"/>
    </location>
    <ligand>
        <name>FMN</name>
        <dbReference type="ChEBI" id="CHEBI:58210"/>
    </ligand>
</feature>
<evidence type="ECO:0000255" key="1">
    <source>
        <dbReference type="HAMAP-Rule" id="MF_01614"/>
    </source>
</evidence>
<name>NAMA_BACAN</name>
<reference key="1">
    <citation type="journal article" date="2003" name="Nature">
        <title>The genome sequence of Bacillus anthracis Ames and comparison to closely related bacteria.</title>
        <authorList>
            <person name="Read T.D."/>
            <person name="Peterson S.N."/>
            <person name="Tourasse N.J."/>
            <person name="Baillie L.W."/>
            <person name="Paulsen I.T."/>
            <person name="Nelson K.E."/>
            <person name="Tettelin H."/>
            <person name="Fouts D.E."/>
            <person name="Eisen J.A."/>
            <person name="Gill S.R."/>
            <person name="Holtzapple E.K."/>
            <person name="Okstad O.A."/>
            <person name="Helgason E."/>
            <person name="Rilstone J."/>
            <person name="Wu M."/>
            <person name="Kolonay J.F."/>
            <person name="Beanan M.J."/>
            <person name="Dodson R.J."/>
            <person name="Brinkac L.M."/>
            <person name="Gwinn M.L."/>
            <person name="DeBoy R.T."/>
            <person name="Madpu R."/>
            <person name="Daugherty S.C."/>
            <person name="Durkin A.S."/>
            <person name="Haft D.H."/>
            <person name="Nelson W.C."/>
            <person name="Peterson J.D."/>
            <person name="Pop M."/>
            <person name="Khouri H.M."/>
            <person name="Radune D."/>
            <person name="Benton J.L."/>
            <person name="Mahamoud Y."/>
            <person name="Jiang L."/>
            <person name="Hance I.R."/>
            <person name="Weidman J.F."/>
            <person name="Berry K.J."/>
            <person name="Plaut R.D."/>
            <person name="Wolf A.M."/>
            <person name="Watkins K.L."/>
            <person name="Nierman W.C."/>
            <person name="Hazen A."/>
            <person name="Cline R.T."/>
            <person name="Redmond C."/>
            <person name="Thwaite J.E."/>
            <person name="White O."/>
            <person name="Salzberg S.L."/>
            <person name="Thomason B."/>
            <person name="Friedlander A.M."/>
            <person name="Koehler T.M."/>
            <person name="Hanna P.C."/>
            <person name="Kolstoe A.-B."/>
            <person name="Fraser C.M."/>
        </authorList>
    </citation>
    <scope>NUCLEOTIDE SEQUENCE [LARGE SCALE GENOMIC DNA]</scope>
    <source>
        <strain>Ames / isolate Porton</strain>
    </source>
</reference>
<reference key="2">
    <citation type="journal article" date="2009" name="J. Bacteriol.">
        <title>The complete genome sequence of Bacillus anthracis Ames 'Ancestor'.</title>
        <authorList>
            <person name="Ravel J."/>
            <person name="Jiang L."/>
            <person name="Stanley S.T."/>
            <person name="Wilson M.R."/>
            <person name="Decker R.S."/>
            <person name="Read T.D."/>
            <person name="Worsham P."/>
            <person name="Keim P.S."/>
            <person name="Salzberg S.L."/>
            <person name="Fraser-Liggett C.M."/>
            <person name="Rasko D.A."/>
        </authorList>
    </citation>
    <scope>NUCLEOTIDE SEQUENCE [LARGE SCALE GENOMIC DNA]</scope>
    <source>
        <strain>Ames ancestor</strain>
    </source>
</reference>
<reference key="3">
    <citation type="submission" date="2004-01" db="EMBL/GenBank/DDBJ databases">
        <title>Complete genome sequence of Bacillus anthracis Sterne.</title>
        <authorList>
            <person name="Brettin T.S."/>
            <person name="Bruce D."/>
            <person name="Challacombe J.F."/>
            <person name="Gilna P."/>
            <person name="Han C."/>
            <person name="Hill K."/>
            <person name="Hitchcock P."/>
            <person name="Jackson P."/>
            <person name="Keim P."/>
            <person name="Longmire J."/>
            <person name="Lucas S."/>
            <person name="Okinaka R."/>
            <person name="Richardson P."/>
            <person name="Rubin E."/>
            <person name="Tice H."/>
        </authorList>
    </citation>
    <scope>NUCLEOTIDE SEQUENCE [LARGE SCALE GENOMIC DNA]</scope>
    <source>
        <strain>Sterne</strain>
    </source>
</reference>
<comment type="function">
    <text evidence="1">Catalyzes the reduction of the double bond of an array of alpha,beta-unsaturated aldehydes and ketones. It also reduces the nitro group of nitroester and nitroaromatic compounds. It could have a role in detoxification processes.</text>
</comment>
<comment type="catalytic activity">
    <reaction evidence="1">
        <text>A + NADPH + H(+) = AH2 + NADP(+)</text>
        <dbReference type="Rhea" id="RHEA:13149"/>
        <dbReference type="ChEBI" id="CHEBI:13193"/>
        <dbReference type="ChEBI" id="CHEBI:15378"/>
        <dbReference type="ChEBI" id="CHEBI:17499"/>
        <dbReference type="ChEBI" id="CHEBI:57783"/>
        <dbReference type="ChEBI" id="CHEBI:58349"/>
        <dbReference type="EC" id="1.6.99.1"/>
    </reaction>
</comment>
<comment type="cofactor">
    <cofactor evidence="1">
        <name>FMN</name>
        <dbReference type="ChEBI" id="CHEBI:58210"/>
    </cofactor>
</comment>
<comment type="subunit">
    <text evidence="1">Homotetramer.</text>
</comment>
<comment type="similarity">
    <text evidence="1">Belongs to the NADH:flavin oxidoreductase/NADH oxidase family. NamA subfamily.</text>
</comment>
<dbReference type="EC" id="1.6.99.1" evidence="1"/>
<dbReference type="EMBL" id="AE016879">
    <property type="protein sequence ID" value="AAP25926.1"/>
    <property type="molecule type" value="Genomic_DNA"/>
</dbReference>
<dbReference type="EMBL" id="AE017334">
    <property type="protein sequence ID" value="AAT31152.1"/>
    <property type="molecule type" value="Genomic_DNA"/>
</dbReference>
<dbReference type="EMBL" id="AE017225">
    <property type="protein sequence ID" value="AAT54206.1"/>
    <property type="molecule type" value="Genomic_DNA"/>
</dbReference>
<dbReference type="RefSeq" id="NP_844440.1">
    <property type="nucleotide sequence ID" value="NC_003997.3"/>
</dbReference>
<dbReference type="RefSeq" id="WP_001083633.1">
    <property type="nucleotide sequence ID" value="NZ_WXXJ01000029.1"/>
</dbReference>
<dbReference type="RefSeq" id="YP_028155.1">
    <property type="nucleotide sequence ID" value="NC_005945.1"/>
</dbReference>
<dbReference type="SMR" id="Q81RK6"/>
<dbReference type="STRING" id="261594.GBAA_2038"/>
<dbReference type="DNASU" id="1085848"/>
<dbReference type="GeneID" id="45021954"/>
<dbReference type="KEGG" id="ban:BA_2038"/>
<dbReference type="KEGG" id="bar:GBAA_2038"/>
<dbReference type="KEGG" id="bat:BAS1891"/>
<dbReference type="PATRIC" id="fig|198094.11.peg.2010"/>
<dbReference type="eggNOG" id="COG1902">
    <property type="taxonomic scope" value="Bacteria"/>
</dbReference>
<dbReference type="HOGENOM" id="CLU_012153_2_1_9"/>
<dbReference type="OMA" id="YNPRWPW"/>
<dbReference type="OrthoDB" id="9772736at2"/>
<dbReference type="Proteomes" id="UP000000427">
    <property type="component" value="Chromosome"/>
</dbReference>
<dbReference type="Proteomes" id="UP000000594">
    <property type="component" value="Chromosome"/>
</dbReference>
<dbReference type="GO" id="GO:0010181">
    <property type="term" value="F:FMN binding"/>
    <property type="evidence" value="ECO:0007669"/>
    <property type="project" value="UniProtKB-UniRule"/>
</dbReference>
<dbReference type="GO" id="GO:0050661">
    <property type="term" value="F:NADP binding"/>
    <property type="evidence" value="ECO:0007669"/>
    <property type="project" value="UniProtKB-UniRule"/>
</dbReference>
<dbReference type="GO" id="GO:0003959">
    <property type="term" value="F:NADPH dehydrogenase activity"/>
    <property type="evidence" value="ECO:0007669"/>
    <property type="project" value="UniProtKB-UniRule"/>
</dbReference>
<dbReference type="GO" id="GO:0009636">
    <property type="term" value="P:response to toxic substance"/>
    <property type="evidence" value="ECO:0007669"/>
    <property type="project" value="UniProtKB-KW"/>
</dbReference>
<dbReference type="CDD" id="cd02932">
    <property type="entry name" value="OYE_YqiM_FMN"/>
    <property type="match status" value="1"/>
</dbReference>
<dbReference type="Gene3D" id="3.20.20.70">
    <property type="entry name" value="Aldolase class I"/>
    <property type="match status" value="1"/>
</dbReference>
<dbReference type="HAMAP" id="MF_01614">
    <property type="entry name" value="NamA"/>
    <property type="match status" value="1"/>
</dbReference>
<dbReference type="InterPro" id="IPR013785">
    <property type="entry name" value="Aldolase_TIM"/>
</dbReference>
<dbReference type="InterPro" id="IPR023663">
    <property type="entry name" value="NADPH_DH_bac"/>
</dbReference>
<dbReference type="InterPro" id="IPR001155">
    <property type="entry name" value="OxRdtase_FMN_N"/>
</dbReference>
<dbReference type="InterPro" id="IPR044152">
    <property type="entry name" value="YqjM-like"/>
</dbReference>
<dbReference type="NCBIfam" id="NF010047">
    <property type="entry name" value="PRK13523.1"/>
    <property type="match status" value="1"/>
</dbReference>
<dbReference type="PANTHER" id="PTHR43303">
    <property type="entry name" value="NADPH DEHYDROGENASE C23G7.10C-RELATED"/>
    <property type="match status" value="1"/>
</dbReference>
<dbReference type="PANTHER" id="PTHR43303:SF4">
    <property type="entry name" value="NADPH DEHYDROGENASE C23G7.10C-RELATED"/>
    <property type="match status" value="1"/>
</dbReference>
<dbReference type="Pfam" id="PF00724">
    <property type="entry name" value="Oxidored_FMN"/>
    <property type="match status" value="1"/>
</dbReference>
<dbReference type="SUPFAM" id="SSF51395">
    <property type="entry name" value="FMN-linked oxidoreductases"/>
    <property type="match status" value="1"/>
</dbReference>
<keyword id="KW-0216">Detoxification</keyword>
<keyword id="KW-0285">Flavoprotein</keyword>
<keyword id="KW-0288">FMN</keyword>
<keyword id="KW-0521">NADP</keyword>
<keyword id="KW-0560">Oxidoreductase</keyword>
<keyword id="KW-1185">Reference proteome</keyword>
<accession>Q81RK6</accession>
<accession>Q6HZT3</accession>
<accession>Q6KTR8</accession>